<evidence type="ECO:0000255" key="1">
    <source>
        <dbReference type="HAMAP-Rule" id="MF_00344"/>
    </source>
</evidence>
<gene>
    <name evidence="1" type="primary">guaA</name>
    <name type="ordered locus">MGAS10750_Spy1068</name>
</gene>
<dbReference type="EC" id="6.3.5.2" evidence="1"/>
<dbReference type="EMBL" id="CP000262">
    <property type="protein sequence ID" value="ABF38018.1"/>
    <property type="molecule type" value="Genomic_DNA"/>
</dbReference>
<dbReference type="SMR" id="Q1J6G5"/>
<dbReference type="MEROPS" id="C26.957"/>
<dbReference type="KEGG" id="spi:MGAS10750_Spy1068"/>
<dbReference type="HOGENOM" id="CLU_014340_0_5_9"/>
<dbReference type="UniPathway" id="UPA00189">
    <property type="reaction ID" value="UER00296"/>
</dbReference>
<dbReference type="Proteomes" id="UP000002434">
    <property type="component" value="Chromosome"/>
</dbReference>
<dbReference type="GO" id="GO:0005829">
    <property type="term" value="C:cytosol"/>
    <property type="evidence" value="ECO:0007669"/>
    <property type="project" value="TreeGrafter"/>
</dbReference>
<dbReference type="GO" id="GO:0005524">
    <property type="term" value="F:ATP binding"/>
    <property type="evidence" value="ECO:0007669"/>
    <property type="project" value="UniProtKB-UniRule"/>
</dbReference>
<dbReference type="GO" id="GO:0003921">
    <property type="term" value="F:GMP synthase activity"/>
    <property type="evidence" value="ECO:0007669"/>
    <property type="project" value="InterPro"/>
</dbReference>
<dbReference type="CDD" id="cd01742">
    <property type="entry name" value="GATase1_GMP_Synthase"/>
    <property type="match status" value="1"/>
</dbReference>
<dbReference type="CDD" id="cd01997">
    <property type="entry name" value="GMP_synthase_C"/>
    <property type="match status" value="1"/>
</dbReference>
<dbReference type="FunFam" id="3.30.300.10:FF:000002">
    <property type="entry name" value="GMP synthase [glutamine-hydrolyzing]"/>
    <property type="match status" value="1"/>
</dbReference>
<dbReference type="FunFam" id="3.40.50.620:FF:000001">
    <property type="entry name" value="GMP synthase [glutamine-hydrolyzing]"/>
    <property type="match status" value="1"/>
</dbReference>
<dbReference type="FunFam" id="3.40.50.880:FF:000001">
    <property type="entry name" value="GMP synthase [glutamine-hydrolyzing]"/>
    <property type="match status" value="1"/>
</dbReference>
<dbReference type="Gene3D" id="3.30.300.10">
    <property type="match status" value="1"/>
</dbReference>
<dbReference type="Gene3D" id="3.40.50.880">
    <property type="match status" value="1"/>
</dbReference>
<dbReference type="Gene3D" id="3.40.50.620">
    <property type="entry name" value="HUPs"/>
    <property type="match status" value="1"/>
</dbReference>
<dbReference type="HAMAP" id="MF_00344">
    <property type="entry name" value="GMP_synthase"/>
    <property type="match status" value="1"/>
</dbReference>
<dbReference type="InterPro" id="IPR029062">
    <property type="entry name" value="Class_I_gatase-like"/>
</dbReference>
<dbReference type="InterPro" id="IPR017926">
    <property type="entry name" value="GATASE"/>
</dbReference>
<dbReference type="InterPro" id="IPR001674">
    <property type="entry name" value="GMP_synth_C"/>
</dbReference>
<dbReference type="InterPro" id="IPR004739">
    <property type="entry name" value="GMP_synth_GATase"/>
</dbReference>
<dbReference type="InterPro" id="IPR022955">
    <property type="entry name" value="GMP_synthase"/>
</dbReference>
<dbReference type="InterPro" id="IPR025777">
    <property type="entry name" value="GMPS_ATP_PPase_dom"/>
</dbReference>
<dbReference type="InterPro" id="IPR022310">
    <property type="entry name" value="NAD/GMP_synthase"/>
</dbReference>
<dbReference type="InterPro" id="IPR014729">
    <property type="entry name" value="Rossmann-like_a/b/a_fold"/>
</dbReference>
<dbReference type="NCBIfam" id="TIGR00884">
    <property type="entry name" value="guaA_Cterm"/>
    <property type="match status" value="1"/>
</dbReference>
<dbReference type="NCBIfam" id="TIGR00888">
    <property type="entry name" value="guaA_Nterm"/>
    <property type="match status" value="1"/>
</dbReference>
<dbReference type="NCBIfam" id="NF000848">
    <property type="entry name" value="PRK00074.1"/>
    <property type="match status" value="1"/>
</dbReference>
<dbReference type="PANTHER" id="PTHR11922:SF2">
    <property type="entry name" value="GMP SYNTHASE [GLUTAMINE-HYDROLYZING]"/>
    <property type="match status" value="1"/>
</dbReference>
<dbReference type="PANTHER" id="PTHR11922">
    <property type="entry name" value="GMP SYNTHASE-RELATED"/>
    <property type="match status" value="1"/>
</dbReference>
<dbReference type="Pfam" id="PF00117">
    <property type="entry name" value="GATase"/>
    <property type="match status" value="1"/>
</dbReference>
<dbReference type="Pfam" id="PF00958">
    <property type="entry name" value="GMP_synt_C"/>
    <property type="match status" value="1"/>
</dbReference>
<dbReference type="Pfam" id="PF02540">
    <property type="entry name" value="NAD_synthase"/>
    <property type="match status" value="1"/>
</dbReference>
<dbReference type="PRINTS" id="PR00097">
    <property type="entry name" value="ANTSNTHASEII"/>
</dbReference>
<dbReference type="PRINTS" id="PR00099">
    <property type="entry name" value="CPSGATASE"/>
</dbReference>
<dbReference type="PRINTS" id="PR00096">
    <property type="entry name" value="GATASE"/>
</dbReference>
<dbReference type="SUPFAM" id="SSF52402">
    <property type="entry name" value="Adenine nucleotide alpha hydrolases-like"/>
    <property type="match status" value="1"/>
</dbReference>
<dbReference type="SUPFAM" id="SSF52317">
    <property type="entry name" value="Class I glutamine amidotransferase-like"/>
    <property type="match status" value="1"/>
</dbReference>
<dbReference type="SUPFAM" id="SSF54810">
    <property type="entry name" value="GMP synthetase C-terminal dimerisation domain"/>
    <property type="match status" value="1"/>
</dbReference>
<dbReference type="PROSITE" id="PS51273">
    <property type="entry name" value="GATASE_TYPE_1"/>
    <property type="match status" value="1"/>
</dbReference>
<dbReference type="PROSITE" id="PS51553">
    <property type="entry name" value="GMPS_ATP_PPASE"/>
    <property type="match status" value="1"/>
</dbReference>
<sequence length="520" mass="57502">MTEISILNDVQKIIVLDYGSQYNQLIARRIREFGVFSELKSHKITAQELREINPIGIVLSGGPNSVYADNAFGIDPEIFELGIPILGICYGMQLITHKLGGKVVPAGQAGNREYGQSTLHLRETSKLFSGTPQEQLVLMSHGDAVTEIPEGFHLVGDSNDCPYAAIENTEKNLYGIQFHPEVRHSVYGNDILKNFAISICGARGDWSMDNFIDMEIAKIRETVGDRKVLLGLSGGVDSSVVGVLLQKAIGDQLTCIFVDHGLLRKDEGDQVMGMLGGKFGLNIIRVDASKRFLDLLADVEDPEKKRKIIGNEFVYVFDDEASKLKGVDFLAQGTLYTDIIESGTETAQTIKSHHNVGGLPEDMQFELIEPLNTLFKDEVRALGIALGMPEEIVWRQPFPGPGLAIRVMGAITEEKLETVRESDAILREEIAKAGLDRDVWQYFTVNTGVRSVGVMGDGRTYDYTIAIRAITSIDGMTADFAQLPWDVLKKISTRIVNEVDHVNRIVYDITSKPPATVEWE</sequence>
<accession>Q1J6G5</accession>
<keyword id="KW-0067">ATP-binding</keyword>
<keyword id="KW-0315">Glutamine amidotransferase</keyword>
<keyword id="KW-0332">GMP biosynthesis</keyword>
<keyword id="KW-0436">Ligase</keyword>
<keyword id="KW-0547">Nucleotide-binding</keyword>
<keyword id="KW-0658">Purine biosynthesis</keyword>
<organism>
    <name type="scientific">Streptococcus pyogenes serotype M4 (strain MGAS10750)</name>
    <dbReference type="NCBI Taxonomy" id="370554"/>
    <lineage>
        <taxon>Bacteria</taxon>
        <taxon>Bacillati</taxon>
        <taxon>Bacillota</taxon>
        <taxon>Bacilli</taxon>
        <taxon>Lactobacillales</taxon>
        <taxon>Streptococcaceae</taxon>
        <taxon>Streptococcus</taxon>
    </lineage>
</organism>
<comment type="function">
    <text evidence="1">Catalyzes the synthesis of GMP from XMP.</text>
</comment>
<comment type="catalytic activity">
    <reaction evidence="1">
        <text>XMP + L-glutamine + ATP + H2O = GMP + L-glutamate + AMP + diphosphate + 2 H(+)</text>
        <dbReference type="Rhea" id="RHEA:11680"/>
        <dbReference type="ChEBI" id="CHEBI:15377"/>
        <dbReference type="ChEBI" id="CHEBI:15378"/>
        <dbReference type="ChEBI" id="CHEBI:29985"/>
        <dbReference type="ChEBI" id="CHEBI:30616"/>
        <dbReference type="ChEBI" id="CHEBI:33019"/>
        <dbReference type="ChEBI" id="CHEBI:57464"/>
        <dbReference type="ChEBI" id="CHEBI:58115"/>
        <dbReference type="ChEBI" id="CHEBI:58359"/>
        <dbReference type="ChEBI" id="CHEBI:456215"/>
        <dbReference type="EC" id="6.3.5.2"/>
    </reaction>
</comment>
<comment type="pathway">
    <text evidence="1">Purine metabolism; GMP biosynthesis; GMP from XMP (L-Gln route): step 1/1.</text>
</comment>
<comment type="subunit">
    <text evidence="1">Homodimer.</text>
</comment>
<proteinExistence type="inferred from homology"/>
<protein>
    <recommendedName>
        <fullName evidence="1">GMP synthase [glutamine-hydrolyzing]</fullName>
        <ecNumber evidence="1">6.3.5.2</ecNumber>
    </recommendedName>
    <alternativeName>
        <fullName evidence="1">GMP synthetase</fullName>
    </alternativeName>
    <alternativeName>
        <fullName evidence="1">Glutamine amidotransferase</fullName>
    </alternativeName>
</protein>
<name>GUAA_STRPF</name>
<feature type="chain" id="PRO_1000120433" description="GMP synthase [glutamine-hydrolyzing]">
    <location>
        <begin position="1"/>
        <end position="520"/>
    </location>
</feature>
<feature type="domain" description="Glutamine amidotransferase type-1" evidence="1">
    <location>
        <begin position="12"/>
        <end position="205"/>
    </location>
</feature>
<feature type="domain" description="GMPS ATP-PPase" evidence="1">
    <location>
        <begin position="206"/>
        <end position="395"/>
    </location>
</feature>
<feature type="active site" description="Nucleophile" evidence="1">
    <location>
        <position position="89"/>
    </location>
</feature>
<feature type="active site" evidence="1">
    <location>
        <position position="179"/>
    </location>
</feature>
<feature type="active site" evidence="1">
    <location>
        <position position="181"/>
    </location>
</feature>
<feature type="binding site" evidence="1">
    <location>
        <begin position="233"/>
        <end position="239"/>
    </location>
    <ligand>
        <name>ATP</name>
        <dbReference type="ChEBI" id="CHEBI:30616"/>
    </ligand>
</feature>
<reference key="1">
    <citation type="journal article" date="2006" name="Proc. Natl. Acad. Sci. U.S.A.">
        <title>Molecular genetic anatomy of inter- and intraserotype variation in the human bacterial pathogen group A Streptococcus.</title>
        <authorList>
            <person name="Beres S.B."/>
            <person name="Richter E.W."/>
            <person name="Nagiec M.J."/>
            <person name="Sumby P."/>
            <person name="Porcella S.F."/>
            <person name="DeLeo F.R."/>
            <person name="Musser J.M."/>
        </authorList>
    </citation>
    <scope>NUCLEOTIDE SEQUENCE [LARGE SCALE GENOMIC DNA]</scope>
    <source>
        <strain>MGAS10750</strain>
    </source>
</reference>